<feature type="signal peptide" evidence="2">
    <location>
        <begin position="1"/>
        <end position="17"/>
    </location>
</feature>
<feature type="chain" id="PRO_5003243370" description="Laccase abr2">
    <location>
        <begin position="18"/>
        <end position="587"/>
    </location>
</feature>
<feature type="domain" description="Plastocyanin-like 1" evidence="2">
    <location>
        <begin position="41"/>
        <end position="137"/>
    </location>
</feature>
<feature type="domain" description="Plastocyanin-like 2" evidence="2">
    <location>
        <begin position="168"/>
        <end position="350"/>
    </location>
</feature>
<feature type="domain" description="Plastocyanin-like 3" evidence="2">
    <location>
        <begin position="397"/>
        <end position="577"/>
    </location>
</feature>
<feature type="binding site" evidence="1">
    <location>
        <position position="75"/>
    </location>
    <ligand>
        <name>Cu cation</name>
        <dbReference type="ChEBI" id="CHEBI:23378"/>
        <label>1</label>
    </ligand>
</feature>
<feature type="binding site" evidence="1">
    <location>
        <position position="77"/>
    </location>
    <ligand>
        <name>Cu cation</name>
        <dbReference type="ChEBI" id="CHEBI:23378"/>
        <label>2</label>
    </ligand>
</feature>
<feature type="binding site" evidence="1">
    <location>
        <position position="119"/>
    </location>
    <ligand>
        <name>Cu cation</name>
        <dbReference type="ChEBI" id="CHEBI:23378"/>
        <label>2</label>
    </ligand>
</feature>
<feature type="binding site" evidence="1">
    <location>
        <position position="121"/>
    </location>
    <ligand>
        <name>Cu cation</name>
        <dbReference type="ChEBI" id="CHEBI:23378"/>
        <label>3</label>
    </ligand>
</feature>
<feature type="binding site" evidence="1">
    <location>
        <position position="487"/>
    </location>
    <ligand>
        <name>Cu cation</name>
        <dbReference type="ChEBI" id="CHEBI:23378"/>
        <label>4</label>
    </ligand>
</feature>
<feature type="glycosylation site" description="N-linked (GlcNAc...) asparagine" evidence="3">
    <location>
        <position position="71"/>
    </location>
</feature>
<feature type="glycosylation site" description="N-linked (GlcNAc...) asparagine" evidence="3">
    <location>
        <position position="228"/>
    </location>
</feature>
<feature type="glycosylation site" description="N-linked (GlcNAc...) asparagine" evidence="3">
    <location>
        <position position="383"/>
    </location>
</feature>
<feature type="glycosylation site" description="N-linked (GlcNAc...) asparagine" evidence="3">
    <location>
        <position position="420"/>
    </location>
</feature>
<feature type="glycosylation site" description="N-linked (GlcNAc...) asparagine" evidence="3">
    <location>
        <position position="462"/>
    </location>
</feature>
<feature type="glycosylation site" description="N-linked (GlcNAc...) asparagine" evidence="3">
    <location>
        <position position="504"/>
    </location>
</feature>
<feature type="mutagenesis site" description="Results in white conidial phenotype." evidence="7">
    <original>Q</original>
    <variation>E</variation>
    <location>
        <position position="217"/>
    </location>
</feature>
<evidence type="ECO:0000250" key="1">
    <source>
        <dbReference type="UniProtKB" id="Q70KY3"/>
    </source>
</evidence>
<evidence type="ECO:0000255" key="2"/>
<evidence type="ECO:0000255" key="3">
    <source>
        <dbReference type="PROSITE-ProRule" id="PRU00498"/>
    </source>
</evidence>
<evidence type="ECO:0000269" key="4">
    <source>
    </source>
</evidence>
<evidence type="ECO:0000269" key="5">
    <source>
    </source>
</evidence>
<evidence type="ECO:0000269" key="6">
    <source>
    </source>
</evidence>
<evidence type="ECO:0000269" key="7">
    <source>
    </source>
</evidence>
<evidence type="ECO:0000269" key="8">
    <source>
    </source>
</evidence>
<evidence type="ECO:0000269" key="9">
    <source>
    </source>
</evidence>
<evidence type="ECO:0000269" key="10">
    <source>
    </source>
</evidence>
<evidence type="ECO:0000269" key="11">
    <source>
    </source>
</evidence>
<evidence type="ECO:0000269" key="12">
    <source>
    </source>
</evidence>
<evidence type="ECO:0000269" key="13">
    <source>
    </source>
</evidence>
<evidence type="ECO:0000269" key="14">
    <source>
    </source>
</evidence>
<evidence type="ECO:0000303" key="15">
    <source>
    </source>
</evidence>
<evidence type="ECO:0000305" key="16"/>
<evidence type="ECO:0000305" key="17">
    <source>
    </source>
</evidence>
<organism>
    <name type="scientific">Aspergillus fumigatus (strain ATCC MYA-4609 / CBS 101355 / FGSC A1100 / Af293)</name>
    <name type="common">Neosartorya fumigata</name>
    <dbReference type="NCBI Taxonomy" id="330879"/>
    <lineage>
        <taxon>Eukaryota</taxon>
        <taxon>Fungi</taxon>
        <taxon>Dikarya</taxon>
        <taxon>Ascomycota</taxon>
        <taxon>Pezizomycotina</taxon>
        <taxon>Eurotiomycetes</taxon>
        <taxon>Eurotiomycetidae</taxon>
        <taxon>Eurotiales</taxon>
        <taxon>Aspergillaceae</taxon>
        <taxon>Aspergillus</taxon>
        <taxon>Aspergillus subgen. Fumigati</taxon>
    </lineage>
</organism>
<accession>E9RBR0</accession>
<gene>
    <name evidence="15" type="primary">abr2</name>
    <name type="ORF">AFUA_2G17530</name>
</gene>
<proteinExistence type="evidence at protein level"/>
<comment type="function">
    <text evidence="4 6 7 8 9 10 12 13 14">Laccase; part of the gene cluster that mediates the biosynthesis of dihydroxynaphthalene (DHN)-melanin, a bluish-green pigment and a structural component of the conidial wall (PubMed:10515939, PubMed:14970241, PubMed:19156203). The first step of the pathway is the production of the heptaketide naphtopyrone YWA1 by the polyketide synthase alb1 though condensation of acetyl-CoA with malonyl-CoA (PubMed:10515939). The naphtopyrone YWA1 is then converted to the pentaketide 1,3,6,8-tetrahydroxynaphthalene (1,3,6,8-THN) by the heptaketide hydrolyase ayg1 though chain-length shortening (PubMed:10515939). 1,3,6,8-THN is substrate of the hydroxynaphthalene reductase arp2 to yield scytalone (PubMed:10515939). The scytalone dehydratase arp1 then reduces scytalone to 1,3,8-THN (PubMed:10515939). 1,3,8-THN is also substrate of the hydroxynaphthalene reductase arp2 to yield vermelone (PubMed:10515939). Vermelone is further converted by the multicopper oxidase abr1 to 1,8-DHN (PubMed:10515939). Finally the laccase abr2 transforms 1,8-DHN to DHN-melanin (PubMed:10515939). DHN-melanin biosynthesis appears to be initiated in endosomes where early enzymes (abl1, ayg1, arp1 and arp2) localize, with exocytosis leading to melanin deposition on the cell surface where late enzymes (abr1 and abr2) localize (PubMed:26972005). DHN-melanin is an important structural component of the outer cell wall and is required for the presence of conidial surface hydrophobins (PubMed:19703288). DHN-melanin also plays a crucial role in fungal virulence, including a protective role against the host's immune defenses (PubMed:19156203, PubMed:20145078, PubMed:21573171, PubMed:21747802, PubMed:24818666). DHN-melanin also protects conidia against amoeba predation (PubMed:25684622).</text>
</comment>
<comment type="pathway">
    <text evidence="4 6">Pigment biosynthesis; melanin biosynthesis.</text>
</comment>
<comment type="subcellular location">
    <subcellularLocation>
        <location evidence="14">Cell surface</location>
    </subcellularLocation>
</comment>
<comment type="induction">
    <text evidence="11">Expression is up-regulated upon hyphal competency and drastically increased during conidiation (PubMed:16988817, PubMed:24123270). Expression is controlled by brlA, the master regulator of conidiophore development, and is responsive to the copper level in the medium (PubMed:24123270).</text>
</comment>
<comment type="disruption phenotype">
    <text evidence="5 6 14">Changes the gray-green conidial pigment to a brown color and reduces the ornamentation of conidia (PubMed:16988817, PubMed:26972005). Reduces overall laccase activity only during sporulation, but not during vegetative growth (PubMed:16988817). Causes enhanced insect mortality compared to the parent strain in a wax moth Galleria mellonella infection model, probably through exacerbated immune response of the wax moth (PubMed:19156203).</text>
</comment>
<comment type="similarity">
    <text evidence="16">Belongs to the multicopper oxidase family.</text>
</comment>
<sequence length="587" mass="65289">MWYQSASLLGVAAVAQAATVHYSLDLTWETGSPNGVSREMIFVNGQFPGPAIILNEGDEAIIDVTNHLPFNTSIHFHGIEQKNTPWADGVVGLSQWAIQPGQSYTYQWRADTYGTYWYHAHDKAEIMDGLYGPVHIRPRPNRDSPFSMISDDPADIRAMKQAERNGKLVMLSDWDHLTGQEYMKAMEETGYDIFCSDSVLINGRGSVFCHDPEELTQMVPPPELAILNSSLTDKGCLPFVPPIQGNWEHHPDKVPPGLNEGCHPSTTQETIFTVDAAHQWASFHFISAASLKVLVVSIDEHPMYVYEVDGRYIEPQLAHSVKLYNGERYSVMVKLDKEPANYKMRAANDGGNQIVSGFATVTYEGGETSQRPSQPYIDYGSRNTSADVIPLDTNHLPPYPAISPASEPDDFHILMLGRTNSSWEWSLDGAAFLPSNLAALPPAILSPQAPEFADALKITTRNDTWVDIVFQLVVSETTPIQPPHPLHKHSNKGFLLGTGHGKFNWTSIKEAKEASPESFLETPVYRDTFTTSPQGETWTAIRYHVENPGPFLLHCHMTTHLQSGMGLILMDGVDVWPEVYADMITPM</sequence>
<name>ABR2_ASPFU</name>
<dbReference type="EC" id="1.10.3.-" evidence="17"/>
<dbReference type="EMBL" id="AAHF01000001">
    <property type="protein sequence ID" value="EAL94050.2"/>
    <property type="molecule type" value="Genomic_DNA"/>
</dbReference>
<dbReference type="RefSeq" id="XP_756088.2">
    <property type="nucleotide sequence ID" value="XM_750995.2"/>
</dbReference>
<dbReference type="SMR" id="E9RBR0"/>
<dbReference type="STRING" id="330879.E9RBR0"/>
<dbReference type="GlyCosmos" id="E9RBR0">
    <property type="glycosylation" value="6 sites, No reported glycans"/>
</dbReference>
<dbReference type="EnsemblFungi" id="EAL94050">
    <property type="protein sequence ID" value="EAL94050"/>
    <property type="gene ID" value="AFUA_2G17530"/>
</dbReference>
<dbReference type="GeneID" id="3512772"/>
<dbReference type="KEGG" id="afm:AFUA_2G17530"/>
<dbReference type="VEuPathDB" id="FungiDB:Afu2g17530"/>
<dbReference type="eggNOG" id="KOG1263">
    <property type="taxonomic scope" value="Eukaryota"/>
</dbReference>
<dbReference type="HOGENOM" id="CLU_006504_5_0_1"/>
<dbReference type="InParanoid" id="E9RBR0"/>
<dbReference type="OMA" id="GDWEHHP"/>
<dbReference type="OrthoDB" id="2121828at2759"/>
<dbReference type="UniPathway" id="UPA00785"/>
<dbReference type="Proteomes" id="UP000002530">
    <property type="component" value="Chromosome 2"/>
</dbReference>
<dbReference type="GO" id="GO:0009986">
    <property type="term" value="C:cell surface"/>
    <property type="evidence" value="ECO:0007669"/>
    <property type="project" value="UniProtKB-SubCell"/>
</dbReference>
<dbReference type="GO" id="GO:0005507">
    <property type="term" value="F:copper ion binding"/>
    <property type="evidence" value="ECO:0007669"/>
    <property type="project" value="InterPro"/>
</dbReference>
<dbReference type="GO" id="GO:0052716">
    <property type="term" value="F:hydroquinone:oxygen oxidoreductase activity"/>
    <property type="evidence" value="ECO:0000315"/>
    <property type="project" value="AspGD"/>
</dbReference>
<dbReference type="GO" id="GO:0016491">
    <property type="term" value="F:oxidoreductase activity"/>
    <property type="evidence" value="ECO:0000318"/>
    <property type="project" value="GO_Central"/>
</dbReference>
<dbReference type="GO" id="GO:0042438">
    <property type="term" value="P:melanin biosynthetic process"/>
    <property type="evidence" value="ECO:0000315"/>
    <property type="project" value="AspGD"/>
</dbReference>
<dbReference type="GO" id="GO:0046148">
    <property type="term" value="P:pigment biosynthetic process"/>
    <property type="evidence" value="ECO:0000315"/>
    <property type="project" value="AspGD"/>
</dbReference>
<dbReference type="CDD" id="cd13850">
    <property type="entry name" value="CuRO_1_Abr2_like"/>
    <property type="match status" value="1"/>
</dbReference>
<dbReference type="CDD" id="cd13876">
    <property type="entry name" value="CuRO_2_Abr2_like"/>
    <property type="match status" value="1"/>
</dbReference>
<dbReference type="CDD" id="cd13898">
    <property type="entry name" value="CuRO_3_Abr2_like"/>
    <property type="match status" value="1"/>
</dbReference>
<dbReference type="FunFam" id="2.60.40.420:FF:000115">
    <property type="entry name" value="Conidial pigment biosynthesis oxidase Arb2/brown2"/>
    <property type="match status" value="1"/>
</dbReference>
<dbReference type="FunFam" id="2.60.40.420:FF:000036">
    <property type="entry name" value="L-ascorbate oxidase"/>
    <property type="match status" value="1"/>
</dbReference>
<dbReference type="Gene3D" id="2.60.40.420">
    <property type="entry name" value="Cupredoxins - blue copper proteins"/>
    <property type="match status" value="3"/>
</dbReference>
<dbReference type="InterPro" id="IPR011707">
    <property type="entry name" value="Cu-oxidase-like_N"/>
</dbReference>
<dbReference type="InterPro" id="IPR001117">
    <property type="entry name" value="Cu-oxidase_2nd"/>
</dbReference>
<dbReference type="InterPro" id="IPR011706">
    <property type="entry name" value="Cu-oxidase_C"/>
</dbReference>
<dbReference type="InterPro" id="IPR045087">
    <property type="entry name" value="Cu-oxidase_fam"/>
</dbReference>
<dbReference type="InterPro" id="IPR033138">
    <property type="entry name" value="Cu_oxidase_CS"/>
</dbReference>
<dbReference type="InterPro" id="IPR002355">
    <property type="entry name" value="Cu_oxidase_Cu_BS"/>
</dbReference>
<dbReference type="InterPro" id="IPR008972">
    <property type="entry name" value="Cupredoxin"/>
</dbReference>
<dbReference type="PANTHER" id="PTHR11709:SF488">
    <property type="entry name" value="LACCASE-RELATED"/>
    <property type="match status" value="1"/>
</dbReference>
<dbReference type="PANTHER" id="PTHR11709">
    <property type="entry name" value="MULTI-COPPER OXIDASE"/>
    <property type="match status" value="1"/>
</dbReference>
<dbReference type="Pfam" id="PF00394">
    <property type="entry name" value="Cu-oxidase"/>
    <property type="match status" value="1"/>
</dbReference>
<dbReference type="Pfam" id="PF07731">
    <property type="entry name" value="Cu-oxidase_2"/>
    <property type="match status" value="1"/>
</dbReference>
<dbReference type="Pfam" id="PF07732">
    <property type="entry name" value="Cu-oxidase_3"/>
    <property type="match status" value="1"/>
</dbReference>
<dbReference type="SUPFAM" id="SSF49503">
    <property type="entry name" value="Cupredoxins"/>
    <property type="match status" value="3"/>
</dbReference>
<dbReference type="PROSITE" id="PS00079">
    <property type="entry name" value="MULTICOPPER_OXIDASE1"/>
    <property type="match status" value="1"/>
</dbReference>
<dbReference type="PROSITE" id="PS00080">
    <property type="entry name" value="MULTICOPPER_OXIDASE2"/>
    <property type="match status" value="1"/>
</dbReference>
<keyword id="KW-0186">Copper</keyword>
<keyword id="KW-0325">Glycoprotein</keyword>
<keyword id="KW-0479">Metal-binding</keyword>
<keyword id="KW-0560">Oxidoreductase</keyword>
<keyword id="KW-1185">Reference proteome</keyword>
<keyword id="KW-0732">Signal</keyword>
<protein>
    <recommendedName>
        <fullName evidence="15">Laccase abr2</fullName>
        <ecNumber evidence="17">1.10.3.-</ecNumber>
    </recommendedName>
    <alternativeName>
        <fullName evidence="16">Conidial pigment biosynthesis oxidase abr2</fullName>
    </alternativeName>
</protein>
<reference key="1">
    <citation type="journal article" date="2005" name="Nature">
        <title>Genomic sequence of the pathogenic and allergenic filamentous fungus Aspergillus fumigatus.</title>
        <authorList>
            <person name="Nierman W.C."/>
            <person name="Pain A."/>
            <person name="Anderson M.J."/>
            <person name="Wortman J.R."/>
            <person name="Kim H.S."/>
            <person name="Arroyo J."/>
            <person name="Berriman M."/>
            <person name="Abe K."/>
            <person name="Archer D.B."/>
            <person name="Bermejo C."/>
            <person name="Bennett J.W."/>
            <person name="Bowyer P."/>
            <person name="Chen D."/>
            <person name="Collins M."/>
            <person name="Coulsen R."/>
            <person name="Davies R."/>
            <person name="Dyer P.S."/>
            <person name="Farman M.L."/>
            <person name="Fedorova N."/>
            <person name="Fedorova N.D."/>
            <person name="Feldblyum T.V."/>
            <person name="Fischer R."/>
            <person name="Fosker N."/>
            <person name="Fraser A."/>
            <person name="Garcia J.L."/>
            <person name="Garcia M.J."/>
            <person name="Goble A."/>
            <person name="Goldman G.H."/>
            <person name="Gomi K."/>
            <person name="Griffith-Jones S."/>
            <person name="Gwilliam R."/>
            <person name="Haas B.J."/>
            <person name="Haas H."/>
            <person name="Harris D.E."/>
            <person name="Horiuchi H."/>
            <person name="Huang J."/>
            <person name="Humphray S."/>
            <person name="Jimenez J."/>
            <person name="Keller N."/>
            <person name="Khouri H."/>
            <person name="Kitamoto K."/>
            <person name="Kobayashi T."/>
            <person name="Konzack S."/>
            <person name="Kulkarni R."/>
            <person name="Kumagai T."/>
            <person name="Lafton A."/>
            <person name="Latge J.-P."/>
            <person name="Li W."/>
            <person name="Lord A."/>
            <person name="Lu C."/>
            <person name="Majoros W.H."/>
            <person name="May G.S."/>
            <person name="Miller B.L."/>
            <person name="Mohamoud Y."/>
            <person name="Molina M."/>
            <person name="Monod M."/>
            <person name="Mouyna I."/>
            <person name="Mulligan S."/>
            <person name="Murphy L.D."/>
            <person name="O'Neil S."/>
            <person name="Paulsen I."/>
            <person name="Penalva M.A."/>
            <person name="Pertea M."/>
            <person name="Price C."/>
            <person name="Pritchard B.L."/>
            <person name="Quail M.A."/>
            <person name="Rabbinowitsch E."/>
            <person name="Rawlins N."/>
            <person name="Rajandream M.A."/>
            <person name="Reichard U."/>
            <person name="Renauld H."/>
            <person name="Robson G.D."/>
            <person name="Rodriguez de Cordoba S."/>
            <person name="Rodriguez-Pena J.M."/>
            <person name="Ronning C.M."/>
            <person name="Rutter S."/>
            <person name="Salzberg S.L."/>
            <person name="Sanchez M."/>
            <person name="Sanchez-Ferrero J.C."/>
            <person name="Saunders D."/>
            <person name="Seeger K."/>
            <person name="Squares R."/>
            <person name="Squares S."/>
            <person name="Takeuchi M."/>
            <person name="Tekaia F."/>
            <person name="Turner G."/>
            <person name="Vazquez de Aldana C.R."/>
            <person name="Weidman J."/>
            <person name="White O."/>
            <person name="Woodward J.R."/>
            <person name="Yu J.-H."/>
            <person name="Fraser C.M."/>
            <person name="Galagan J.E."/>
            <person name="Asai K."/>
            <person name="Machida M."/>
            <person name="Hall N."/>
            <person name="Barrell B.G."/>
            <person name="Denning D.W."/>
        </authorList>
    </citation>
    <scope>NUCLEOTIDE SEQUENCE [LARGE SCALE GENOMIC DNA]</scope>
    <source>
        <strain>ATCC MYA-4609 / CBS 101355 / FGSC A1100 / Af293</strain>
    </source>
</reference>
<reference key="2">
    <citation type="journal article" date="1999" name="J. Bacteriol.">
        <title>A developmentally regulated gene cluster involved in conidial pigment biosynthesis in Aspergillus fumigatus.</title>
        <authorList>
            <person name="Tsai H.F."/>
            <person name="Wheeler M.H."/>
            <person name="Chang Y.C."/>
            <person name="Kwon-Chung K.J."/>
        </authorList>
    </citation>
    <scope>FUNCTION</scope>
</reference>
<reference key="3">
    <citation type="journal article" date="2004" name="J. Med. Microbiol.">
        <title>Production of melanin by Aspergillus fumigatus.</title>
        <authorList>
            <person name="Youngchim S."/>
            <person name="Morris-Jones R."/>
            <person name="Hay R.J."/>
            <person name="Hamilton A.J."/>
        </authorList>
    </citation>
    <scope>FUNCTION</scope>
</reference>
<reference key="4">
    <citation type="journal article" date="2006" name="Arch. Microbiol.">
        <title>Characterisation of the laccase-encoding gene abr2 of the dihydroxynaphthalene-like melanin gene cluster of Aspergillus fumigatus.</title>
        <authorList>
            <person name="Sugareva V."/>
            <person name="Haertl A."/>
            <person name="Brock M."/>
            <person name="Huebner K."/>
            <person name="Rohde M."/>
            <person name="Heinekamp T."/>
            <person name="Brakhage A.A."/>
        </authorList>
    </citation>
    <scope>FUNCTION</scope>
    <scope>DISRUPTION PHENOTYPE</scope>
    <scope>INDUCTION</scope>
</reference>
<reference key="5">
    <citation type="journal article" date="2009" name="BMC Microbiol.">
        <title>Melanin is an essential component for the integrity of the cell wall of Aspergillus fumigatus conidia.</title>
        <authorList>
            <person name="Pihet M."/>
            <person name="Vandeputte P."/>
            <person name="Tronchin G."/>
            <person name="Renier G."/>
            <person name="Saulnier P."/>
            <person name="Georgeault S."/>
            <person name="Mallet R."/>
            <person name="Chabasse D."/>
            <person name="Symoens F."/>
            <person name="Bouchara J.P."/>
        </authorList>
    </citation>
    <scope>FUNCTION</scope>
    <scope>MUTAGENESIS OF GLN-217</scope>
</reference>
<reference key="6">
    <citation type="journal article" date="2009" name="PLoS ONE">
        <title>Conidiation color mutants of Aspergillus fumigatus are highly pathogenic to the heterologous insect host Galleria mellonella.</title>
        <authorList>
            <person name="Jackson J.C."/>
            <person name="Higgins L.A."/>
            <person name="Lin X."/>
        </authorList>
    </citation>
    <scope>FUNCTION</scope>
    <scope>DISRUPTION PHENOTYPE</scope>
</reference>
<reference key="7">
    <citation type="journal article" date="2010" name="Antimicrob. Agents Chemother.">
        <title>Cutaneous model of invasive aspergillosis.</title>
        <authorList>
            <person name="Ben-Ami R."/>
            <person name="Lewis R.E."/>
            <person name="Leventakos K."/>
            <person name="Latge J.P."/>
            <person name="Kontoyiannis D.P."/>
        </authorList>
    </citation>
    <scope>FUNCTION</scope>
</reference>
<reference key="8">
    <citation type="journal article" date="2011" name="Front. Microbiol.">
        <title>Conidial dihydroxynaphthalene melanin of the human pathogenic fungus Aspergillus fumigatus interferes with the host endocytosis pathway.</title>
        <authorList>
            <person name="Thywissen A."/>
            <person name="Heinekamp T."/>
            <person name="Dahse H.M."/>
            <person name="Schmaler-Ripcke J."/>
            <person name="Nietzsche S."/>
            <person name="Zipfel P.F."/>
            <person name="Brakhage A.A."/>
        </authorList>
    </citation>
    <scope>FUNCTION</scope>
</reference>
<reference key="9">
    <citation type="journal article" date="2011" name="PLoS ONE">
        <title>Automated image analysis of the host-pathogen interaction between phagocytes and Aspergillus fumigatus.</title>
        <authorList>
            <person name="Mech F."/>
            <person name="Thywissen A."/>
            <person name="Guthke R."/>
            <person name="Brakhage A.A."/>
            <person name="Figge M.T."/>
        </authorList>
    </citation>
    <scope>FUNCTION</scope>
</reference>
<reference key="10">
    <citation type="journal article" date="2013" name="Eukaryot. Cell">
        <title>Laccases involved in 1,8-dihydroxynaphthalene melanin biosynthesis in Aspergillus fumigatus are regulated by developmental factors and copper homeostasis.</title>
        <authorList>
            <person name="Upadhyay S."/>
            <person name="Torres G."/>
            <person name="Lin X."/>
        </authorList>
    </citation>
    <scope>INDUCTION</scope>
</reference>
<reference key="11">
    <citation type="journal article" date="2014" name="Infect. Immun.">
        <title>Surface structure characterization of Aspergillus fumigatus conidia mutated in the melanin synthesis pathway and their human cellular immune response.</title>
        <authorList>
            <person name="Bayry J."/>
            <person name="Beaussart A."/>
            <person name="Dufrene Y.F."/>
            <person name="Sharma M."/>
            <person name="Bansal K."/>
            <person name="Kniemeyer O."/>
            <person name="Aimanianda V."/>
            <person name="Brakhage A.A."/>
            <person name="Kaveri S.V."/>
            <person name="Kwon-Chung K.J."/>
            <person name="Latge J.P."/>
            <person name="Beauvais A."/>
        </authorList>
    </citation>
    <scope>FUNCTION</scope>
</reference>
<reference key="12">
    <citation type="journal article" date="2015" name="Environ. Microbiol.">
        <title>Virulence determinants of the human pathogenic fungus Aspergillus fumigatus protect against soil amoeba predation.</title>
        <authorList>
            <person name="Hillmann F."/>
            <person name="Novohradska S."/>
            <person name="Mattern D.J."/>
            <person name="Forberger T."/>
            <person name="Heinekamp T."/>
            <person name="Westermann M."/>
            <person name="Winckler T."/>
            <person name="Brakhage A.A."/>
        </authorList>
    </citation>
    <scope>FUNCTION</scope>
</reference>
<reference key="13">
    <citation type="journal article" date="2016" name="Cell Rep.">
        <title>Subcellular compartmentalization and trafficking of the biosynthetic machinery for fungal melanin.</title>
        <authorList>
            <person name="Upadhyay S."/>
            <person name="Xu X."/>
            <person name="Lowry D."/>
            <person name="Jackson J.C."/>
            <person name="Roberson R.W."/>
            <person name="Lin X."/>
        </authorList>
    </citation>
    <scope>SUBCELLULAR LOCATION</scope>
    <scope>FUNCTION</scope>
    <scope>DISRUPTION PHENOTYPE</scope>
</reference>